<sequence length="507" mass="58320">MTSKTKNIDDIPPEIKEEMIQLYHDLPGIENEYKLIDKIGEGTFSSVYKAKDITGKITKKFASHFWNYGSNYVALKKIYVTSSPQRIYNELNLLYIMTGSSRVAPLCDAKRVRDQVIAVLPYYPHEEFRTFYRDLPIKGIKKYIWELLRALKFVHSKGIIHRDIKPTNFLFNLELGRGVLVDFGLAEAQMDYKSMISSQNDYDNYANTNHDGGYSMRNHEQFCPCIMRNQYSPNSHNQTPPMVTIQNGKVVHLNNVNGVDLTKGYPKNETRRIKRANRAGTRGFRAPEVLMKCGAQSTKIDIWSVGVILLSLLGRRFPMFQSLDDADSLLELCTIFGWKELRKCAALHGLGFEASGLIWDKPNGYSNGLKEFVYDLLNKECTIGTFPEYSVAFETFGFLQQELHDRMSIEPQLPDPKTNMDAVDAYELKKYQEEIWSDHYWCFQVLEQCFEMDPQKRSSAEDLLKTPFFNELNENTYLLDGESTDEDDVVSSSEADLLDKDVLLISE</sequence>
<gene>
    <name type="primary">CDC7</name>
    <name type="synonym">OAF2</name>
    <name type="ordered locus">YDL017W</name>
    <name type="ORF">D2855</name>
</gene>
<protein>
    <recommendedName>
        <fullName>Cell division control protein 7</fullName>
        <ecNumber>2.7.11.1</ecNumber>
    </recommendedName>
</protein>
<organism>
    <name type="scientific">Saccharomyces cerevisiae (strain ATCC 204508 / S288c)</name>
    <name type="common">Baker's yeast</name>
    <dbReference type="NCBI Taxonomy" id="559292"/>
    <lineage>
        <taxon>Eukaryota</taxon>
        <taxon>Fungi</taxon>
        <taxon>Dikarya</taxon>
        <taxon>Ascomycota</taxon>
        <taxon>Saccharomycotina</taxon>
        <taxon>Saccharomycetes</taxon>
        <taxon>Saccharomycetales</taxon>
        <taxon>Saccharomycetaceae</taxon>
        <taxon>Saccharomyces</taxon>
    </lineage>
</organism>
<name>CDC7_YEAST</name>
<accession>P06243</accession>
<accession>D6VRX3</accession>
<evidence type="ECO:0000250" key="1"/>
<evidence type="ECO:0000255" key="2">
    <source>
        <dbReference type="PROSITE-ProRule" id="PRU00159"/>
    </source>
</evidence>
<evidence type="ECO:0000255" key="3">
    <source>
        <dbReference type="PROSITE-ProRule" id="PRU10027"/>
    </source>
</evidence>
<evidence type="ECO:0000269" key="4">
    <source>
    </source>
</evidence>
<evidence type="ECO:0000269" key="5">
    <source>
    </source>
</evidence>
<evidence type="ECO:0000305" key="6"/>
<keyword id="KW-0002">3D-structure</keyword>
<keyword id="KW-0067">ATP-binding</keyword>
<keyword id="KW-0131">Cell cycle</keyword>
<keyword id="KW-0132">Cell division</keyword>
<keyword id="KW-0418">Kinase</keyword>
<keyword id="KW-0460">Magnesium</keyword>
<keyword id="KW-0469">Meiosis</keyword>
<keyword id="KW-0479">Metal-binding</keyword>
<keyword id="KW-0498">Mitosis</keyword>
<keyword id="KW-0547">Nucleotide-binding</keyword>
<keyword id="KW-1185">Reference proteome</keyword>
<keyword id="KW-0723">Serine/threonine-protein kinase</keyword>
<keyword id="KW-0808">Transferase</keyword>
<dbReference type="EC" id="2.7.11.1"/>
<dbReference type="EMBL" id="M12624">
    <property type="protein sequence ID" value="AAA34485.1"/>
    <property type="molecule type" value="Genomic_DNA"/>
</dbReference>
<dbReference type="EMBL" id="Z48432">
    <property type="protein sequence ID" value="CAA88342.1"/>
    <property type="molecule type" value="Genomic_DNA"/>
</dbReference>
<dbReference type="EMBL" id="Z74065">
    <property type="protein sequence ID" value="CAA98574.1"/>
    <property type="molecule type" value="Genomic_DNA"/>
</dbReference>
<dbReference type="EMBL" id="X14164">
    <property type="protein sequence ID" value="CAA32369.1"/>
    <property type="molecule type" value="Genomic_DNA"/>
</dbReference>
<dbReference type="EMBL" id="X14164">
    <property type="protein sequence ID" value="CAA32370.1"/>
    <property type="status" value="ALT_INIT"/>
    <property type="molecule type" value="Genomic_DNA"/>
</dbReference>
<dbReference type="EMBL" id="X15362">
    <property type="protein sequence ID" value="CAA33420.1"/>
    <property type="molecule type" value="Genomic_DNA"/>
</dbReference>
<dbReference type="EMBL" id="BK006938">
    <property type="protein sequence ID" value="DAA11833.1"/>
    <property type="molecule type" value="Genomic_DNA"/>
</dbReference>
<dbReference type="PIR" id="A25228">
    <property type="entry name" value="A25228"/>
</dbReference>
<dbReference type="RefSeq" id="NP_010267.3">
    <property type="nucleotide sequence ID" value="NM_001180076.3"/>
</dbReference>
<dbReference type="PDB" id="5T2S">
    <property type="method" value="X-ray"/>
    <property type="resolution" value="2.40 A"/>
    <property type="chains" value="B/D=480-491"/>
</dbReference>
<dbReference type="PDB" id="7P5Z">
    <property type="method" value="EM"/>
    <property type="resolution" value="3.30 A"/>
    <property type="chains" value="1=1-507"/>
</dbReference>
<dbReference type="PDB" id="7PT6">
    <property type="method" value="EM"/>
    <property type="resolution" value="3.20 A"/>
    <property type="chains" value="8/H=1-507"/>
</dbReference>
<dbReference type="PDB" id="7PT7">
    <property type="method" value="EM"/>
    <property type="resolution" value="3.80 A"/>
    <property type="chains" value="8=1-507"/>
</dbReference>
<dbReference type="PDB" id="7V3V">
    <property type="method" value="EM"/>
    <property type="resolution" value="2.90 A"/>
    <property type="chains" value="H=1-507"/>
</dbReference>
<dbReference type="PDBsum" id="5T2S"/>
<dbReference type="PDBsum" id="7P5Z"/>
<dbReference type="PDBsum" id="7PT6"/>
<dbReference type="PDBsum" id="7PT7"/>
<dbReference type="PDBsum" id="7V3V"/>
<dbReference type="EMDB" id="EMD-13211"/>
<dbReference type="EMDB" id="EMD-13619"/>
<dbReference type="EMDB" id="EMD-13620"/>
<dbReference type="EMDB" id="EMD-13624"/>
<dbReference type="EMDB" id="EMD-13629"/>
<dbReference type="EMDB" id="EMD-13640"/>
<dbReference type="EMDB" id="EMD-13644"/>
<dbReference type="EMDB" id="EMD-13647"/>
<dbReference type="EMDB" id="EMD-13648"/>
<dbReference type="EMDB" id="EMD-13656"/>
<dbReference type="EMDB" id="EMD-31685"/>
<dbReference type="SMR" id="P06243"/>
<dbReference type="BioGRID" id="32038">
    <property type="interactions" value="483"/>
</dbReference>
<dbReference type="ComplexPortal" id="CPX-867">
    <property type="entry name" value="DBF4-dependent CDC7 kinase complex"/>
</dbReference>
<dbReference type="DIP" id="DIP-1235N"/>
<dbReference type="FunCoup" id="P06243">
    <property type="interactions" value="1110"/>
</dbReference>
<dbReference type="IntAct" id="P06243">
    <property type="interactions" value="81"/>
</dbReference>
<dbReference type="MINT" id="P06243"/>
<dbReference type="STRING" id="4932.YDL017W"/>
<dbReference type="MoonDB" id="P06243">
    <property type="type" value="Predicted"/>
</dbReference>
<dbReference type="iPTMnet" id="P06243"/>
<dbReference type="PaxDb" id="4932-YDL017W"/>
<dbReference type="PeptideAtlas" id="P06243"/>
<dbReference type="EnsemblFungi" id="YDL017W_mRNA">
    <property type="protein sequence ID" value="YDL017W"/>
    <property type="gene ID" value="YDL017W"/>
</dbReference>
<dbReference type="GeneID" id="851545"/>
<dbReference type="KEGG" id="sce:YDL017W"/>
<dbReference type="AGR" id="SGD:S000002175"/>
<dbReference type="SGD" id="S000002175">
    <property type="gene designation" value="CDC7"/>
</dbReference>
<dbReference type="VEuPathDB" id="FungiDB:YDL017W"/>
<dbReference type="eggNOG" id="KOG1167">
    <property type="taxonomic scope" value="Eukaryota"/>
</dbReference>
<dbReference type="GeneTree" id="ENSGT00550000075011"/>
<dbReference type="HOGENOM" id="CLU_000288_118_2_1"/>
<dbReference type="InParanoid" id="P06243"/>
<dbReference type="OMA" id="PHEEFRN"/>
<dbReference type="OrthoDB" id="10020333at2759"/>
<dbReference type="BioCyc" id="YEAST:G3O-29446-MONOMER"/>
<dbReference type="BRENDA" id="2.7.11.1">
    <property type="organism ID" value="984"/>
</dbReference>
<dbReference type="Reactome" id="R-SCE-176187">
    <property type="pathway name" value="Activation of ATR in response to replication stress"/>
</dbReference>
<dbReference type="Reactome" id="R-SCE-68962">
    <property type="pathway name" value="Activation of the pre-replicative complex"/>
</dbReference>
<dbReference type="BioGRID-ORCS" id="851545">
    <property type="hits" value="3 hits in 13 CRISPR screens"/>
</dbReference>
<dbReference type="PRO" id="PR:P06243"/>
<dbReference type="Proteomes" id="UP000002311">
    <property type="component" value="Chromosome IV"/>
</dbReference>
<dbReference type="RNAct" id="P06243">
    <property type="molecule type" value="protein"/>
</dbReference>
<dbReference type="GO" id="GO:0005813">
    <property type="term" value="C:centrosome"/>
    <property type="evidence" value="ECO:0000314"/>
    <property type="project" value="ComplexPortal"/>
</dbReference>
<dbReference type="GO" id="GO:0000785">
    <property type="term" value="C:chromatin"/>
    <property type="evidence" value="ECO:0000314"/>
    <property type="project" value="SGD"/>
</dbReference>
<dbReference type="GO" id="GO:0000775">
    <property type="term" value="C:chromosome, centromeric region"/>
    <property type="evidence" value="ECO:0000314"/>
    <property type="project" value="SGD"/>
</dbReference>
<dbReference type="GO" id="GO:0005737">
    <property type="term" value="C:cytoplasm"/>
    <property type="evidence" value="ECO:0000318"/>
    <property type="project" value="GO_Central"/>
</dbReference>
<dbReference type="GO" id="GO:0031431">
    <property type="term" value="C:Dbf4-dependent protein kinase complex"/>
    <property type="evidence" value="ECO:0000314"/>
    <property type="project" value="SGD"/>
</dbReference>
<dbReference type="GO" id="GO:0005634">
    <property type="term" value="C:nucleus"/>
    <property type="evidence" value="ECO:0000314"/>
    <property type="project" value="ComplexPortal"/>
</dbReference>
<dbReference type="GO" id="GO:0005524">
    <property type="term" value="F:ATP binding"/>
    <property type="evidence" value="ECO:0007669"/>
    <property type="project" value="UniProtKB-KW"/>
</dbReference>
<dbReference type="GO" id="GO:0042802">
    <property type="term" value="F:identical protein binding"/>
    <property type="evidence" value="ECO:0000353"/>
    <property type="project" value="IntAct"/>
</dbReference>
<dbReference type="GO" id="GO:0046872">
    <property type="term" value="F:metal ion binding"/>
    <property type="evidence" value="ECO:0007669"/>
    <property type="project" value="UniProtKB-KW"/>
</dbReference>
<dbReference type="GO" id="GO:0106310">
    <property type="term" value="F:protein serine kinase activity"/>
    <property type="evidence" value="ECO:0007669"/>
    <property type="project" value="RHEA"/>
</dbReference>
<dbReference type="GO" id="GO:0004674">
    <property type="term" value="F:protein serine/threonine kinase activity"/>
    <property type="evidence" value="ECO:0000314"/>
    <property type="project" value="SGD"/>
</dbReference>
<dbReference type="GO" id="GO:0051301">
    <property type="term" value="P:cell division"/>
    <property type="evidence" value="ECO:0007669"/>
    <property type="project" value="UniProtKB-KW"/>
</dbReference>
<dbReference type="GO" id="GO:0006270">
    <property type="term" value="P:DNA replication initiation"/>
    <property type="evidence" value="ECO:0000314"/>
    <property type="project" value="ComplexPortal"/>
</dbReference>
<dbReference type="GO" id="GO:0000727">
    <property type="term" value="P:double-strand break repair via break-induced replication"/>
    <property type="evidence" value="ECO:0000315"/>
    <property type="project" value="SGD"/>
</dbReference>
<dbReference type="GO" id="GO:0033314">
    <property type="term" value="P:mitotic DNA replication checkpoint signaling"/>
    <property type="evidence" value="ECO:0000316"/>
    <property type="project" value="SGD"/>
</dbReference>
<dbReference type="GO" id="GO:1902977">
    <property type="term" value="P:mitotic DNA replication preinitiation complex assembly"/>
    <property type="evidence" value="ECO:0000314"/>
    <property type="project" value="SGD"/>
</dbReference>
<dbReference type="GO" id="GO:0001100">
    <property type="term" value="P:negative regulation of exit from mitosis"/>
    <property type="evidence" value="ECO:0000353"/>
    <property type="project" value="SGD"/>
</dbReference>
<dbReference type="GO" id="GO:1905561">
    <property type="term" value="P:positive regulation of kinetochore assembly"/>
    <property type="evidence" value="ECO:0000314"/>
    <property type="project" value="ComplexPortal"/>
</dbReference>
<dbReference type="GO" id="GO:0060903">
    <property type="term" value="P:positive regulation of meiosis I"/>
    <property type="evidence" value="ECO:0000314"/>
    <property type="project" value="ComplexPortal"/>
</dbReference>
<dbReference type="GO" id="GO:1903343">
    <property type="term" value="P:positive regulation of meiotic DNA double-strand break formation"/>
    <property type="evidence" value="ECO:0000314"/>
    <property type="project" value="ComplexPortal"/>
</dbReference>
<dbReference type="GO" id="GO:1905263">
    <property type="term" value="P:positive regulation of meiotic DNA double-strand break formation involved in reciprocal meiotic recombination"/>
    <property type="evidence" value="ECO:0000315"/>
    <property type="project" value="SGD"/>
</dbReference>
<dbReference type="GO" id="GO:1905342">
    <property type="term" value="P:positive regulation of protein localization to kinetochore"/>
    <property type="evidence" value="ECO:0000314"/>
    <property type="project" value="SGD"/>
</dbReference>
<dbReference type="GO" id="GO:1904968">
    <property type="term" value="P:positive regulation of spindle attachment to meiosis I kinetochore"/>
    <property type="evidence" value="ECO:0000315"/>
    <property type="project" value="SGD"/>
</dbReference>
<dbReference type="GO" id="GO:0006279">
    <property type="term" value="P:premeiotic DNA replication"/>
    <property type="evidence" value="ECO:0000315"/>
    <property type="project" value="SGD"/>
</dbReference>
<dbReference type="GO" id="GO:0031503">
    <property type="term" value="P:protein-containing complex localization"/>
    <property type="evidence" value="ECO:0000315"/>
    <property type="project" value="SGD"/>
</dbReference>
<dbReference type="GO" id="GO:0007165">
    <property type="term" value="P:signal transduction"/>
    <property type="evidence" value="ECO:0000318"/>
    <property type="project" value="GO_Central"/>
</dbReference>
<dbReference type="CDD" id="cd14019">
    <property type="entry name" value="STKc_Cdc7"/>
    <property type="match status" value="1"/>
</dbReference>
<dbReference type="FunFam" id="3.30.200.20:FF:000637">
    <property type="entry name" value="Serine/threonine protein kinase"/>
    <property type="match status" value="1"/>
</dbReference>
<dbReference type="Gene3D" id="3.30.200.20">
    <property type="entry name" value="Phosphorylase Kinase, domain 1"/>
    <property type="match status" value="1"/>
</dbReference>
<dbReference type="Gene3D" id="1.10.510.10">
    <property type="entry name" value="Transferase(Phosphotransferase) domain 1"/>
    <property type="match status" value="1"/>
</dbReference>
<dbReference type="InterPro" id="IPR011009">
    <property type="entry name" value="Kinase-like_dom_sf"/>
</dbReference>
<dbReference type="InterPro" id="IPR000719">
    <property type="entry name" value="Prot_kinase_dom"/>
</dbReference>
<dbReference type="InterPro" id="IPR008271">
    <property type="entry name" value="Ser/Thr_kinase_AS"/>
</dbReference>
<dbReference type="PANTHER" id="PTHR44167:SF23">
    <property type="entry name" value="CDC7 KINASE, ISOFORM A-RELATED"/>
    <property type="match status" value="1"/>
</dbReference>
<dbReference type="PANTHER" id="PTHR44167">
    <property type="entry name" value="OVARIAN-SPECIFIC SERINE/THREONINE-PROTEIN KINASE LOK-RELATED"/>
    <property type="match status" value="1"/>
</dbReference>
<dbReference type="Pfam" id="PF00069">
    <property type="entry name" value="Pkinase"/>
    <property type="match status" value="2"/>
</dbReference>
<dbReference type="SMART" id="SM00220">
    <property type="entry name" value="S_TKc"/>
    <property type="match status" value="1"/>
</dbReference>
<dbReference type="SUPFAM" id="SSF56112">
    <property type="entry name" value="Protein kinase-like (PK-like)"/>
    <property type="match status" value="1"/>
</dbReference>
<dbReference type="PROSITE" id="PS50011">
    <property type="entry name" value="PROTEIN_KINASE_DOM"/>
    <property type="match status" value="1"/>
</dbReference>
<dbReference type="PROSITE" id="PS00108">
    <property type="entry name" value="PROTEIN_KINASE_ST"/>
    <property type="match status" value="1"/>
</dbReference>
<comment type="function">
    <text evidence="5">Serine/threonine-protein kinase. Needed for the initiation of DNA synthesis during mitosis as well as for synaptonemal complex formation and commitment to recombination during meiosis. Required for HTA1-HTB1 locus transcription repression.</text>
</comment>
<comment type="catalytic activity">
    <reaction>
        <text>L-seryl-[protein] + ATP = O-phospho-L-seryl-[protein] + ADP + H(+)</text>
        <dbReference type="Rhea" id="RHEA:17989"/>
        <dbReference type="Rhea" id="RHEA-COMP:9863"/>
        <dbReference type="Rhea" id="RHEA-COMP:11604"/>
        <dbReference type="ChEBI" id="CHEBI:15378"/>
        <dbReference type="ChEBI" id="CHEBI:29999"/>
        <dbReference type="ChEBI" id="CHEBI:30616"/>
        <dbReference type="ChEBI" id="CHEBI:83421"/>
        <dbReference type="ChEBI" id="CHEBI:456216"/>
        <dbReference type="EC" id="2.7.11.1"/>
    </reaction>
</comment>
<comment type="catalytic activity">
    <reaction>
        <text>L-threonyl-[protein] + ATP = O-phospho-L-threonyl-[protein] + ADP + H(+)</text>
        <dbReference type="Rhea" id="RHEA:46608"/>
        <dbReference type="Rhea" id="RHEA-COMP:11060"/>
        <dbReference type="Rhea" id="RHEA-COMP:11605"/>
        <dbReference type="ChEBI" id="CHEBI:15378"/>
        <dbReference type="ChEBI" id="CHEBI:30013"/>
        <dbReference type="ChEBI" id="CHEBI:30616"/>
        <dbReference type="ChEBI" id="CHEBI:61977"/>
        <dbReference type="ChEBI" id="CHEBI:456216"/>
        <dbReference type="EC" id="2.7.11.1"/>
    </reaction>
</comment>
<comment type="cofactor">
    <cofactor evidence="1">
        <name>Mg(2+)</name>
        <dbReference type="ChEBI" id="CHEBI:18420"/>
    </cofactor>
</comment>
<comment type="subunit">
    <text>Associates with DBF4 and ORC2.</text>
</comment>
<comment type="interaction">
    <interactant intactId="EBI-4451">
        <id>P06243</id>
    </interactant>
    <interactant intactId="EBI-4440">
        <id>P32562</id>
        <label>CDC5</label>
    </interactant>
    <organismsDiffer>false</organismsDiffer>
    <experiments>11</experiments>
</comment>
<comment type="interaction">
    <interactant intactId="EBI-4451">
        <id>P06243</id>
    </interactant>
    <interactant intactId="EBI-4451">
        <id>P06243</id>
        <label>CDC7</label>
    </interactant>
    <organismsDiffer>false</organismsDiffer>
    <experiments>3</experiments>
</comment>
<comment type="interaction">
    <interactant intactId="EBI-4451">
        <id>P06243</id>
    </interactant>
    <interactant intactId="EBI-5575">
        <id>P32325</id>
        <label>DBF4</label>
    </interactant>
    <organismsDiffer>false</organismsDiffer>
    <experiments>9</experiments>
</comment>
<comment type="interaction">
    <interactant intactId="EBI-4451">
        <id>P06243</id>
    </interactant>
    <interactant intactId="EBI-32189">
        <id>Q04087</id>
        <label>LRS4</label>
    </interactant>
    <organismsDiffer>false</organismsDiffer>
    <experiments>5</experiments>
</comment>
<comment type="miscellaneous">
    <text evidence="4">Present with 1600 molecules/cell in log phase SD medium.</text>
</comment>
<comment type="similarity">
    <text evidence="2">Belongs to the protein kinase superfamily. Ser/Thr protein kinase family. CDC7 subfamily.</text>
</comment>
<comment type="sequence caution" evidence="6">
    <conflict type="erroneous initiation">
        <sequence resource="EMBL-CDS" id="CAA32370"/>
    </conflict>
</comment>
<proteinExistence type="evidence at protein level"/>
<feature type="chain" id="PRO_0000085766" description="Cell division control protein 7">
    <location>
        <begin position="1"/>
        <end position="507"/>
    </location>
</feature>
<feature type="domain" description="Protein kinase" evidence="2">
    <location>
        <begin position="33"/>
        <end position="469"/>
    </location>
</feature>
<feature type="active site" description="Proton acceptor" evidence="2 3">
    <location>
        <position position="163"/>
    </location>
</feature>
<feature type="binding site" evidence="2">
    <location>
        <begin position="39"/>
        <end position="47"/>
    </location>
    <ligand>
        <name>ATP</name>
        <dbReference type="ChEBI" id="CHEBI:30616"/>
    </ligand>
</feature>
<feature type="binding site" evidence="2">
    <location>
        <position position="76"/>
    </location>
    <ligand>
        <name>ATP</name>
        <dbReference type="ChEBI" id="CHEBI:30616"/>
    </ligand>
</feature>
<reference key="1">
    <citation type="journal article" date="1986" name="Mol. Cell. Biol.">
        <title>Molecular characterization of cell cycle gene CDC7 from Saccharomyces cerevisiae.</title>
        <authorList>
            <person name="Patterson M."/>
            <person name="Sclafani R.A."/>
            <person name="Fangman W.L."/>
            <person name="Rosamond J."/>
        </authorList>
    </citation>
    <scope>NUCLEOTIDE SEQUENCE [GENOMIC DNA]</scope>
</reference>
<reference key="2">
    <citation type="journal article" date="1997" name="Nature">
        <title>The nucleotide sequence of Saccharomyces cerevisiae chromosome IV.</title>
        <authorList>
            <person name="Jacq C."/>
            <person name="Alt-Moerbe J."/>
            <person name="Andre B."/>
            <person name="Arnold W."/>
            <person name="Bahr A."/>
            <person name="Ballesta J.P.G."/>
            <person name="Bargues M."/>
            <person name="Baron L."/>
            <person name="Becker A."/>
            <person name="Biteau N."/>
            <person name="Bloecker H."/>
            <person name="Blugeon C."/>
            <person name="Boskovic J."/>
            <person name="Brandt P."/>
            <person name="Brueckner M."/>
            <person name="Buitrago M.J."/>
            <person name="Coster F."/>
            <person name="Delaveau T."/>
            <person name="del Rey F."/>
            <person name="Dujon B."/>
            <person name="Eide L.G."/>
            <person name="Garcia-Cantalejo J.M."/>
            <person name="Goffeau A."/>
            <person name="Gomez-Peris A."/>
            <person name="Granotier C."/>
            <person name="Hanemann V."/>
            <person name="Hankeln T."/>
            <person name="Hoheisel J.D."/>
            <person name="Jaeger W."/>
            <person name="Jimenez A."/>
            <person name="Jonniaux J.-L."/>
            <person name="Kraemer C."/>
            <person name="Kuester H."/>
            <person name="Laamanen P."/>
            <person name="Legros Y."/>
            <person name="Louis E.J."/>
            <person name="Moeller-Rieker S."/>
            <person name="Monnet A."/>
            <person name="Moro M."/>
            <person name="Mueller-Auer S."/>
            <person name="Nussbaumer B."/>
            <person name="Paricio N."/>
            <person name="Paulin L."/>
            <person name="Perea J."/>
            <person name="Perez-Alonso M."/>
            <person name="Perez-Ortin J.E."/>
            <person name="Pohl T.M."/>
            <person name="Prydz H."/>
            <person name="Purnelle B."/>
            <person name="Rasmussen S.W."/>
            <person name="Remacha M.A."/>
            <person name="Revuelta J.L."/>
            <person name="Rieger M."/>
            <person name="Salom D."/>
            <person name="Saluz H.P."/>
            <person name="Saiz J.E."/>
            <person name="Saren A.-M."/>
            <person name="Schaefer M."/>
            <person name="Scharfe M."/>
            <person name="Schmidt E.R."/>
            <person name="Schneider C."/>
            <person name="Scholler P."/>
            <person name="Schwarz S."/>
            <person name="Soler-Mira A."/>
            <person name="Urrestarazu L.A."/>
            <person name="Verhasselt P."/>
            <person name="Vissers S."/>
            <person name="Voet M."/>
            <person name="Volckaert G."/>
            <person name="Wagner G."/>
            <person name="Wambutt R."/>
            <person name="Wedler E."/>
            <person name="Wedler H."/>
            <person name="Woelfl S."/>
            <person name="Harris D.E."/>
            <person name="Bowman S."/>
            <person name="Brown D."/>
            <person name="Churcher C.M."/>
            <person name="Connor R."/>
            <person name="Dedman K."/>
            <person name="Gentles S."/>
            <person name="Hamlin N."/>
            <person name="Hunt S."/>
            <person name="Jones L."/>
            <person name="McDonald S."/>
            <person name="Murphy L.D."/>
            <person name="Niblett D."/>
            <person name="Odell C."/>
            <person name="Oliver K."/>
            <person name="Rajandream M.A."/>
            <person name="Richards C."/>
            <person name="Shore L."/>
            <person name="Walsh S.V."/>
            <person name="Barrell B.G."/>
            <person name="Dietrich F.S."/>
            <person name="Mulligan J.T."/>
            <person name="Allen E."/>
            <person name="Araujo R."/>
            <person name="Aviles E."/>
            <person name="Berno A."/>
            <person name="Carpenter J."/>
            <person name="Chen E."/>
            <person name="Cherry J.M."/>
            <person name="Chung E."/>
            <person name="Duncan M."/>
            <person name="Hunicke-Smith S."/>
            <person name="Hyman R.W."/>
            <person name="Komp C."/>
            <person name="Lashkari D."/>
            <person name="Lew H."/>
            <person name="Lin D."/>
            <person name="Mosedale D."/>
            <person name="Nakahara K."/>
            <person name="Namath A."/>
            <person name="Oefner P."/>
            <person name="Oh C."/>
            <person name="Petel F.X."/>
            <person name="Roberts D."/>
            <person name="Schramm S."/>
            <person name="Schroeder M."/>
            <person name="Shogren T."/>
            <person name="Shroff N."/>
            <person name="Winant A."/>
            <person name="Yelton M.A."/>
            <person name="Botstein D."/>
            <person name="Davis R.W."/>
            <person name="Johnston M."/>
            <person name="Andrews S."/>
            <person name="Brinkman R."/>
            <person name="Cooper J."/>
            <person name="Ding H."/>
            <person name="Du Z."/>
            <person name="Favello A."/>
            <person name="Fulton L."/>
            <person name="Gattung S."/>
            <person name="Greco T."/>
            <person name="Hallsworth K."/>
            <person name="Hawkins J."/>
            <person name="Hillier L.W."/>
            <person name="Jier M."/>
            <person name="Johnson D."/>
            <person name="Johnston L."/>
            <person name="Kirsten J."/>
            <person name="Kucaba T."/>
            <person name="Langston Y."/>
            <person name="Latreille P."/>
            <person name="Le T."/>
            <person name="Mardis E."/>
            <person name="Menezes S."/>
            <person name="Miller N."/>
            <person name="Nhan M."/>
            <person name="Pauley A."/>
            <person name="Peluso D."/>
            <person name="Rifkin L."/>
            <person name="Riles L."/>
            <person name="Taich A."/>
            <person name="Trevaskis E."/>
            <person name="Vignati D."/>
            <person name="Wilcox L."/>
            <person name="Wohldman P."/>
            <person name="Vaudin M."/>
            <person name="Wilson R."/>
            <person name="Waterston R."/>
            <person name="Albermann K."/>
            <person name="Hani J."/>
            <person name="Heumann K."/>
            <person name="Kleine K."/>
            <person name="Mewes H.-W."/>
            <person name="Zollner A."/>
            <person name="Zaccaria P."/>
        </authorList>
    </citation>
    <scope>NUCLEOTIDE SEQUENCE [LARGE SCALE GENOMIC DNA]</scope>
    <source>
        <strain>ATCC 204508 / S288c</strain>
    </source>
</reference>
<reference key="3">
    <citation type="journal article" date="2014" name="G3 (Bethesda)">
        <title>The reference genome sequence of Saccharomyces cerevisiae: Then and now.</title>
        <authorList>
            <person name="Engel S.R."/>
            <person name="Dietrich F.S."/>
            <person name="Fisk D.G."/>
            <person name="Binkley G."/>
            <person name="Balakrishnan R."/>
            <person name="Costanzo M.C."/>
            <person name="Dwight S.S."/>
            <person name="Hitz B.C."/>
            <person name="Karra K."/>
            <person name="Nash R.S."/>
            <person name="Weng S."/>
            <person name="Wong E.D."/>
            <person name="Lloyd P."/>
            <person name="Skrzypek M.S."/>
            <person name="Miyasato S.R."/>
            <person name="Simison M."/>
            <person name="Cherry J.M."/>
        </authorList>
    </citation>
    <scope>GENOME REANNOTATION</scope>
    <source>
        <strain>ATCC 204508 / S288c</strain>
    </source>
</reference>
<reference key="4">
    <citation type="journal article" date="1988" name="Biochim. Biophys. Acta">
        <title>Characterisation of the CDC7 gene product of Saccharomyces cerevisiae as a protein kinase needed for the initiation of mitotic DNA synthesis.</title>
        <authorList>
            <person name="Bahman M."/>
            <person name="Buck V."/>
            <person name="White A."/>
            <person name="Rosamond J."/>
        </authorList>
    </citation>
    <scope>NUCLEOTIDE SEQUENCE [GENOMIC DNA] OF 1-138</scope>
</reference>
<reference key="5">
    <citation type="journal article" date="1989" name="Nucleic Acids Res.">
        <title>Transcriptional analysis of the CDC7 protein kinase gene of Saccharomyces cerevisiae.</title>
        <authorList>
            <person name="Ham J."/>
            <person name="Moore D."/>
            <person name="Rosamond J."/>
            <person name="Johnston I.R."/>
        </authorList>
    </citation>
    <scope>NUCLEOTIDE SEQUENCE [GENOMIC DNA] OF 1-27</scope>
    <source>
        <strain>ATCC 204508 / S288c</strain>
    </source>
</reference>
<reference key="6">
    <citation type="journal article" date="1991" name="Mol. Gen. Genet.">
        <title>CDC7 protein kinase activity is required for mitosis and meiosis in Saccharomyces cerevisiae.</title>
        <authorList>
            <person name="Buck V."/>
            <person name="Rosamond J."/>
        </authorList>
    </citation>
    <scope>FUNCTION</scope>
</reference>
<reference key="7">
    <citation type="journal article" date="2003" name="Nature">
        <title>Global analysis of protein expression in yeast.</title>
        <authorList>
            <person name="Ghaemmaghami S."/>
            <person name="Huh W.-K."/>
            <person name="Bower K."/>
            <person name="Howson R.W."/>
            <person name="Belle A."/>
            <person name="Dephoure N."/>
            <person name="O'Shea E.K."/>
            <person name="Weissman J.S."/>
        </authorList>
    </citation>
    <scope>LEVEL OF PROTEIN EXPRESSION [LARGE SCALE ANALYSIS]</scope>
</reference>
<reference key="8">
    <citation type="journal article" date="2008" name="Mol. Cell. Proteomics">
        <title>A multidimensional chromatography technology for in-depth phosphoproteome analysis.</title>
        <authorList>
            <person name="Albuquerque C.P."/>
            <person name="Smolka M.B."/>
            <person name="Payne S.H."/>
            <person name="Bafna V."/>
            <person name="Eng J."/>
            <person name="Zhou H."/>
        </authorList>
    </citation>
    <scope>IDENTIFICATION BY MASS SPECTROMETRY [LARGE SCALE ANALYSIS]</scope>
</reference>